<protein>
    <recommendedName>
        <fullName evidence="1">Probable chemoreceptor glutamine deamidase CheD 1</fullName>
        <ecNumber evidence="1">3.5.1.44</ecNumber>
    </recommendedName>
</protein>
<sequence length="171" mass="17754">MTRTTGAAPDRAAPAAGETPGGGGRAQVYLHAGQIAVAAEPTAIVTVLGSCVAVCLHDPVARVGGMNHFLLPLHVEREQSARFGTVAVPQLVEAVVRAGARRASLVAKVFGGASVIGAFRGARNLGDENVQLALRLLDEARIPVLDRDVGGARGRKLIFHVDDGAAWVRQL</sequence>
<keyword id="KW-0145">Chemotaxis</keyword>
<keyword id="KW-0378">Hydrolase</keyword>
<keyword id="KW-1185">Reference proteome</keyword>
<accession>Q2INJ4</accession>
<reference key="1">
    <citation type="submission" date="2006-01" db="EMBL/GenBank/DDBJ databases">
        <title>Complete sequence of Anaeromyxobacter dehalogenans 2CP-C.</title>
        <authorList>
            <person name="Copeland A."/>
            <person name="Lucas S."/>
            <person name="Lapidus A."/>
            <person name="Barry K."/>
            <person name="Detter J.C."/>
            <person name="Glavina T."/>
            <person name="Hammon N."/>
            <person name="Israni S."/>
            <person name="Pitluck S."/>
            <person name="Brettin T."/>
            <person name="Bruce D."/>
            <person name="Han C."/>
            <person name="Tapia R."/>
            <person name="Gilna P."/>
            <person name="Kiss H."/>
            <person name="Schmutz J."/>
            <person name="Larimer F."/>
            <person name="Land M."/>
            <person name="Kyrpides N."/>
            <person name="Anderson I."/>
            <person name="Sanford R.A."/>
            <person name="Ritalahti K.M."/>
            <person name="Thomas H.S."/>
            <person name="Kirby J.R."/>
            <person name="Zhulin I.B."/>
            <person name="Loeffler F.E."/>
            <person name="Richardson P."/>
        </authorList>
    </citation>
    <scope>NUCLEOTIDE SEQUENCE [LARGE SCALE GENOMIC DNA]</scope>
    <source>
        <strain>2CP-C</strain>
    </source>
</reference>
<feature type="chain" id="PRO_0000251000" description="Probable chemoreceptor glutamine deamidase CheD 1">
    <location>
        <begin position="1"/>
        <end position="171"/>
    </location>
</feature>
<feature type="region of interest" description="Disordered" evidence="2">
    <location>
        <begin position="1"/>
        <end position="23"/>
    </location>
</feature>
<feature type="compositionally biased region" description="Low complexity" evidence="2">
    <location>
        <begin position="1"/>
        <end position="18"/>
    </location>
</feature>
<evidence type="ECO:0000255" key="1">
    <source>
        <dbReference type="HAMAP-Rule" id="MF_01440"/>
    </source>
</evidence>
<evidence type="ECO:0000256" key="2">
    <source>
        <dbReference type="SAM" id="MobiDB-lite"/>
    </source>
</evidence>
<comment type="function">
    <text evidence="1">Probably deamidates glutamine residues to glutamate on methyl-accepting chemotaxis receptors (MCPs), playing an important role in chemotaxis.</text>
</comment>
<comment type="catalytic activity">
    <reaction evidence="1">
        <text>L-glutaminyl-[protein] + H2O = L-glutamyl-[protein] + NH4(+)</text>
        <dbReference type="Rhea" id="RHEA:16441"/>
        <dbReference type="Rhea" id="RHEA-COMP:10207"/>
        <dbReference type="Rhea" id="RHEA-COMP:10208"/>
        <dbReference type="ChEBI" id="CHEBI:15377"/>
        <dbReference type="ChEBI" id="CHEBI:28938"/>
        <dbReference type="ChEBI" id="CHEBI:29973"/>
        <dbReference type="ChEBI" id="CHEBI:30011"/>
        <dbReference type="EC" id="3.5.1.44"/>
    </reaction>
</comment>
<comment type="similarity">
    <text evidence="1">Belongs to the CheD family.</text>
</comment>
<name>CHED1_ANADE</name>
<gene>
    <name evidence="1" type="primary">cheD1</name>
    <name type="ordered locus">Adeh_0604</name>
</gene>
<dbReference type="EC" id="3.5.1.44" evidence="1"/>
<dbReference type="EMBL" id="CP000251">
    <property type="protein sequence ID" value="ABC80380.1"/>
    <property type="molecule type" value="Genomic_DNA"/>
</dbReference>
<dbReference type="RefSeq" id="WP_011419663.1">
    <property type="nucleotide sequence ID" value="NC_007760.1"/>
</dbReference>
<dbReference type="SMR" id="Q2INJ4"/>
<dbReference type="STRING" id="290397.Adeh_0604"/>
<dbReference type="KEGG" id="ade:Adeh_0604"/>
<dbReference type="eggNOG" id="COG1871">
    <property type="taxonomic scope" value="Bacteria"/>
</dbReference>
<dbReference type="HOGENOM" id="CLU_087854_1_2_7"/>
<dbReference type="OrthoDB" id="9807202at2"/>
<dbReference type="Proteomes" id="UP000001935">
    <property type="component" value="Chromosome"/>
</dbReference>
<dbReference type="GO" id="GO:0050568">
    <property type="term" value="F:protein-glutamine glutaminase activity"/>
    <property type="evidence" value="ECO:0007669"/>
    <property type="project" value="UniProtKB-UniRule"/>
</dbReference>
<dbReference type="GO" id="GO:0006935">
    <property type="term" value="P:chemotaxis"/>
    <property type="evidence" value="ECO:0007669"/>
    <property type="project" value="UniProtKB-UniRule"/>
</dbReference>
<dbReference type="CDD" id="cd16352">
    <property type="entry name" value="CheD"/>
    <property type="match status" value="1"/>
</dbReference>
<dbReference type="Gene3D" id="3.30.1330.200">
    <property type="match status" value="1"/>
</dbReference>
<dbReference type="HAMAP" id="MF_01440">
    <property type="entry name" value="CheD"/>
    <property type="match status" value="1"/>
</dbReference>
<dbReference type="InterPro" id="IPR038592">
    <property type="entry name" value="CheD-like_sf"/>
</dbReference>
<dbReference type="InterPro" id="IPR005659">
    <property type="entry name" value="Chemorcpt_Glu_NH3ase_CheD"/>
</dbReference>
<dbReference type="InterPro" id="IPR011324">
    <property type="entry name" value="Cytotoxic_necrot_fac-like_cat"/>
</dbReference>
<dbReference type="PANTHER" id="PTHR35147">
    <property type="entry name" value="CHEMORECEPTOR GLUTAMINE DEAMIDASE CHED-RELATED"/>
    <property type="match status" value="1"/>
</dbReference>
<dbReference type="PANTHER" id="PTHR35147:SF2">
    <property type="entry name" value="CHEMORECEPTOR GLUTAMINE DEAMIDASE CHED-RELATED"/>
    <property type="match status" value="1"/>
</dbReference>
<dbReference type="Pfam" id="PF03975">
    <property type="entry name" value="CheD"/>
    <property type="match status" value="1"/>
</dbReference>
<dbReference type="SUPFAM" id="SSF64438">
    <property type="entry name" value="CNF1/YfiH-like putative cysteine hydrolases"/>
    <property type="match status" value="1"/>
</dbReference>
<proteinExistence type="inferred from homology"/>
<organism>
    <name type="scientific">Anaeromyxobacter dehalogenans (strain 2CP-C)</name>
    <dbReference type="NCBI Taxonomy" id="290397"/>
    <lineage>
        <taxon>Bacteria</taxon>
        <taxon>Pseudomonadati</taxon>
        <taxon>Myxococcota</taxon>
        <taxon>Myxococcia</taxon>
        <taxon>Myxococcales</taxon>
        <taxon>Cystobacterineae</taxon>
        <taxon>Anaeromyxobacteraceae</taxon>
        <taxon>Anaeromyxobacter</taxon>
    </lineage>
</organism>